<name>DPS_ECO81</name>
<dbReference type="EC" id="1.16.-.-" evidence="1"/>
<dbReference type="EMBL" id="CU928162">
    <property type="protein sequence ID" value="CAR06982.1"/>
    <property type="molecule type" value="Genomic_DNA"/>
</dbReference>
<dbReference type="RefSeq" id="WP_000100800.1">
    <property type="nucleotide sequence ID" value="NC_011745.1"/>
</dbReference>
<dbReference type="SMR" id="B7MQR6"/>
<dbReference type="GeneID" id="93776616"/>
<dbReference type="KEGG" id="ecq:ECED1_0777"/>
<dbReference type="HOGENOM" id="CLU_098183_1_2_6"/>
<dbReference type="Proteomes" id="UP000000748">
    <property type="component" value="Chromosome"/>
</dbReference>
<dbReference type="GO" id="GO:0005737">
    <property type="term" value="C:cytoplasm"/>
    <property type="evidence" value="ECO:0007669"/>
    <property type="project" value="UniProtKB-UniRule"/>
</dbReference>
<dbReference type="GO" id="GO:0009295">
    <property type="term" value="C:nucleoid"/>
    <property type="evidence" value="ECO:0007669"/>
    <property type="project" value="UniProtKB-SubCell"/>
</dbReference>
<dbReference type="GO" id="GO:0003677">
    <property type="term" value="F:DNA binding"/>
    <property type="evidence" value="ECO:0007669"/>
    <property type="project" value="UniProtKB-UniRule"/>
</dbReference>
<dbReference type="GO" id="GO:0008199">
    <property type="term" value="F:ferric iron binding"/>
    <property type="evidence" value="ECO:0007669"/>
    <property type="project" value="UniProtKB-UniRule"/>
</dbReference>
<dbReference type="GO" id="GO:0016722">
    <property type="term" value="F:oxidoreductase activity, acting on metal ions"/>
    <property type="evidence" value="ECO:0007669"/>
    <property type="project" value="InterPro"/>
</dbReference>
<dbReference type="GO" id="GO:0030261">
    <property type="term" value="P:chromosome condensation"/>
    <property type="evidence" value="ECO:0007669"/>
    <property type="project" value="UniProtKB-KW"/>
</dbReference>
<dbReference type="GO" id="GO:0006879">
    <property type="term" value="P:intracellular iron ion homeostasis"/>
    <property type="evidence" value="ECO:0007669"/>
    <property type="project" value="UniProtKB-KW"/>
</dbReference>
<dbReference type="CDD" id="cd01043">
    <property type="entry name" value="DPS"/>
    <property type="match status" value="1"/>
</dbReference>
<dbReference type="FunFam" id="1.20.1260.10:FF:000003">
    <property type="entry name" value="DNA protection during starvation protein"/>
    <property type="match status" value="1"/>
</dbReference>
<dbReference type="Gene3D" id="1.20.1260.10">
    <property type="match status" value="1"/>
</dbReference>
<dbReference type="HAMAP" id="MF_01441">
    <property type="entry name" value="Dps"/>
    <property type="match status" value="1"/>
</dbReference>
<dbReference type="InterPro" id="IPR002177">
    <property type="entry name" value="DPS_DNA-bd"/>
</dbReference>
<dbReference type="InterPro" id="IPR023188">
    <property type="entry name" value="DPS_DNA-bd_CS"/>
</dbReference>
<dbReference type="InterPro" id="IPR023067">
    <property type="entry name" value="Dps_gammaproteobac"/>
</dbReference>
<dbReference type="InterPro" id="IPR012347">
    <property type="entry name" value="Ferritin-like"/>
</dbReference>
<dbReference type="InterPro" id="IPR009078">
    <property type="entry name" value="Ferritin-like_SF"/>
</dbReference>
<dbReference type="InterPro" id="IPR008331">
    <property type="entry name" value="Ferritin_DPS_dom"/>
</dbReference>
<dbReference type="NCBIfam" id="NF006975">
    <property type="entry name" value="PRK09448.1"/>
    <property type="match status" value="1"/>
</dbReference>
<dbReference type="PANTHER" id="PTHR42932:SF3">
    <property type="entry name" value="DNA PROTECTION DURING STARVATION PROTEIN"/>
    <property type="match status" value="1"/>
</dbReference>
<dbReference type="PANTHER" id="PTHR42932">
    <property type="entry name" value="GENERAL STRESS PROTEIN 20U"/>
    <property type="match status" value="1"/>
</dbReference>
<dbReference type="Pfam" id="PF00210">
    <property type="entry name" value="Ferritin"/>
    <property type="match status" value="1"/>
</dbReference>
<dbReference type="PIRSF" id="PIRSF005900">
    <property type="entry name" value="Dps"/>
    <property type="match status" value="1"/>
</dbReference>
<dbReference type="PRINTS" id="PR01346">
    <property type="entry name" value="HELNAPAPROT"/>
</dbReference>
<dbReference type="SUPFAM" id="SSF47240">
    <property type="entry name" value="Ferritin-like"/>
    <property type="match status" value="1"/>
</dbReference>
<dbReference type="PROSITE" id="PS00818">
    <property type="entry name" value="DPS_1"/>
    <property type="match status" value="1"/>
</dbReference>
<dbReference type="PROSITE" id="PS00819">
    <property type="entry name" value="DPS_2"/>
    <property type="match status" value="1"/>
</dbReference>
<accession>B7MQR6</accession>
<proteinExistence type="inferred from homology"/>
<organism>
    <name type="scientific">Escherichia coli O81 (strain ED1a)</name>
    <dbReference type="NCBI Taxonomy" id="585397"/>
    <lineage>
        <taxon>Bacteria</taxon>
        <taxon>Pseudomonadati</taxon>
        <taxon>Pseudomonadota</taxon>
        <taxon>Gammaproteobacteria</taxon>
        <taxon>Enterobacterales</taxon>
        <taxon>Enterobacteriaceae</taxon>
        <taxon>Escherichia</taxon>
    </lineage>
</organism>
<keyword id="KW-0963">Cytoplasm</keyword>
<keyword id="KW-0226">DNA condensation</keyword>
<keyword id="KW-0238">DNA-binding</keyword>
<keyword id="KW-0408">Iron</keyword>
<keyword id="KW-0409">Iron storage</keyword>
<keyword id="KW-0479">Metal-binding</keyword>
<keyword id="KW-0560">Oxidoreductase</keyword>
<feature type="chain" id="PRO_1000184933" description="DNA protection during starvation protein">
    <location>
        <begin position="1"/>
        <end position="167"/>
    </location>
</feature>
<feature type="binding site" evidence="1">
    <location>
        <position position="51"/>
    </location>
    <ligand>
        <name>Fe cation</name>
        <dbReference type="ChEBI" id="CHEBI:24875"/>
        <label>1</label>
        <note>ligand shared between two neighboring subunits</note>
    </ligand>
</feature>
<feature type="binding site" description="in other chain" evidence="1">
    <location>
        <position position="78"/>
    </location>
    <ligand>
        <name>Fe cation</name>
        <dbReference type="ChEBI" id="CHEBI:24875"/>
        <label>1</label>
        <note>ligand shared between two neighboring subunits</note>
    </ligand>
</feature>
<feature type="binding site" description="in other chain" evidence="1">
    <location>
        <position position="82"/>
    </location>
    <ligand>
        <name>Fe cation</name>
        <dbReference type="ChEBI" id="CHEBI:24875"/>
        <label>1</label>
        <note>ligand shared between two neighboring subunits</note>
    </ligand>
</feature>
<feature type="binding site" evidence="1">
    <location>
        <position position="82"/>
    </location>
    <ligand>
        <name>Fe cation</name>
        <dbReference type="ChEBI" id="CHEBI:24875"/>
        <label>2</label>
    </ligand>
</feature>
<protein>
    <recommendedName>
        <fullName evidence="1">DNA protection during starvation protein</fullName>
        <ecNumber evidence="1">1.16.-.-</ecNumber>
    </recommendedName>
</protein>
<reference key="1">
    <citation type="journal article" date="2009" name="PLoS Genet.">
        <title>Organised genome dynamics in the Escherichia coli species results in highly diverse adaptive paths.</title>
        <authorList>
            <person name="Touchon M."/>
            <person name="Hoede C."/>
            <person name="Tenaillon O."/>
            <person name="Barbe V."/>
            <person name="Baeriswyl S."/>
            <person name="Bidet P."/>
            <person name="Bingen E."/>
            <person name="Bonacorsi S."/>
            <person name="Bouchier C."/>
            <person name="Bouvet O."/>
            <person name="Calteau A."/>
            <person name="Chiapello H."/>
            <person name="Clermont O."/>
            <person name="Cruveiller S."/>
            <person name="Danchin A."/>
            <person name="Diard M."/>
            <person name="Dossat C."/>
            <person name="Karoui M.E."/>
            <person name="Frapy E."/>
            <person name="Garry L."/>
            <person name="Ghigo J.M."/>
            <person name="Gilles A.M."/>
            <person name="Johnson J."/>
            <person name="Le Bouguenec C."/>
            <person name="Lescat M."/>
            <person name="Mangenot S."/>
            <person name="Martinez-Jehanne V."/>
            <person name="Matic I."/>
            <person name="Nassif X."/>
            <person name="Oztas S."/>
            <person name="Petit M.A."/>
            <person name="Pichon C."/>
            <person name="Rouy Z."/>
            <person name="Ruf C.S."/>
            <person name="Schneider D."/>
            <person name="Tourret J."/>
            <person name="Vacherie B."/>
            <person name="Vallenet D."/>
            <person name="Medigue C."/>
            <person name="Rocha E.P.C."/>
            <person name="Denamur E."/>
        </authorList>
    </citation>
    <scope>NUCLEOTIDE SEQUENCE [LARGE SCALE GENOMIC DNA]</scope>
    <source>
        <strain>ED1a</strain>
    </source>
</reference>
<sequence>MSTAKLVKSKATNLLYTRNDVSDSEKKATVELLNRQVIQFIDLSLITKQAHWNMRGANFIAVHEMLDGFRTALIDHLDTMAERAVQLGGVALGTTQVINSKTPLKSYPLDIHNVQDHLKELADRYAIVANDVRKAIGEAKDDDTADILTAASRDLDKFLWFIESNIE</sequence>
<comment type="function">
    <text evidence="1">During stationary phase, binds the chromosome non-specifically, forming a highly ordered and stable dps-DNA co-crystal within which chromosomal DNA is condensed and protected from diverse damages. It protects DNA from oxidative damage by sequestering intracellular Fe(2+) ion and storing it in the form of Fe(3+) oxyhydroxide mineral, which can be released after reduction. One hydrogen peroxide oxidizes two Fe(2+) ions, which prevents hydroxyl radical production by the Fenton reaction. Dps also protects the cell from UV and gamma irradiation, iron and copper toxicity, thermal stress and acid and base shocks. Also shows a weak catalase activity.</text>
</comment>
<comment type="catalytic activity">
    <reaction evidence="1">
        <text>2 Fe(2+) + H2O2 + 2 H(+) = 2 Fe(3+) + 2 H2O</text>
        <dbReference type="Rhea" id="RHEA:48712"/>
        <dbReference type="ChEBI" id="CHEBI:15377"/>
        <dbReference type="ChEBI" id="CHEBI:15378"/>
        <dbReference type="ChEBI" id="CHEBI:16240"/>
        <dbReference type="ChEBI" id="CHEBI:29033"/>
        <dbReference type="ChEBI" id="CHEBI:29034"/>
    </reaction>
</comment>
<comment type="subunit">
    <text evidence="1">Homododecamer. The 12 subunits form a hollow sphere into which the mineral iron core of up to 500 Fe(3+) can be deposited.</text>
</comment>
<comment type="subcellular location">
    <subcellularLocation>
        <location evidence="1">Cytoplasm</location>
        <location evidence="1">Nucleoid</location>
    </subcellularLocation>
</comment>
<comment type="similarity">
    <text evidence="1">Belongs to the Dps family.</text>
</comment>
<evidence type="ECO:0000255" key="1">
    <source>
        <dbReference type="HAMAP-Rule" id="MF_01441"/>
    </source>
</evidence>
<gene>
    <name evidence="1" type="primary">dps</name>
    <name type="ordered locus">ECED1_0777</name>
</gene>